<gene>
    <name type="primary">wdr83</name>
    <name type="synonym">morg1</name>
    <name type="ORF">TGas070i04.1</name>
</gene>
<evidence type="ECO:0000250" key="1"/>
<evidence type="ECO:0000305" key="2"/>
<dbReference type="EMBL" id="CR761781">
    <property type="protein sequence ID" value="CAJ83956.1"/>
    <property type="molecule type" value="mRNA"/>
</dbReference>
<dbReference type="EMBL" id="BC084454">
    <property type="protein sequence ID" value="AAH84454.1"/>
    <property type="molecule type" value="mRNA"/>
</dbReference>
<dbReference type="RefSeq" id="NP_001011071.1">
    <property type="nucleotide sequence ID" value="NM_001011071.1"/>
</dbReference>
<dbReference type="RefSeq" id="XP_012808940.1">
    <property type="nucleotide sequence ID" value="XM_012953486.3"/>
</dbReference>
<dbReference type="SMR" id="Q5XGI5"/>
<dbReference type="FunCoup" id="Q5XGI5">
    <property type="interactions" value="1205"/>
</dbReference>
<dbReference type="STRING" id="8364.ENSXETP00000010561"/>
<dbReference type="PaxDb" id="8364-ENSXETP00000012334"/>
<dbReference type="DNASU" id="496482"/>
<dbReference type="GeneID" id="496482"/>
<dbReference type="KEGG" id="xtr:496482"/>
<dbReference type="AGR" id="Xenbase:XB-GENE-969395"/>
<dbReference type="CTD" id="84292"/>
<dbReference type="Xenbase" id="XB-GENE-969395">
    <property type="gene designation" value="wdr83"/>
</dbReference>
<dbReference type="eggNOG" id="KOG0316">
    <property type="taxonomic scope" value="Eukaryota"/>
</dbReference>
<dbReference type="HOGENOM" id="CLU_000288_57_1_1"/>
<dbReference type="InParanoid" id="Q5XGI5"/>
<dbReference type="OMA" id="MCWDIRT"/>
<dbReference type="OrthoDB" id="71437at2759"/>
<dbReference type="PhylomeDB" id="Q5XGI5"/>
<dbReference type="TreeFam" id="TF314828"/>
<dbReference type="Proteomes" id="UP000008143">
    <property type="component" value="Chromosome 3"/>
</dbReference>
<dbReference type="Bgee" id="ENSXETG00000005598">
    <property type="expression patterns" value="Expressed in neurula embryo and 13 other cell types or tissues"/>
</dbReference>
<dbReference type="ExpressionAtlas" id="Q5XGI5">
    <property type="expression patterns" value="baseline and differential"/>
</dbReference>
<dbReference type="GO" id="GO:0005737">
    <property type="term" value="C:cytoplasm"/>
    <property type="evidence" value="ECO:0007669"/>
    <property type="project" value="UniProtKB-SubCell"/>
</dbReference>
<dbReference type="CDD" id="cd00200">
    <property type="entry name" value="WD40"/>
    <property type="match status" value="1"/>
</dbReference>
<dbReference type="FunFam" id="2.130.10.10:FF:000273">
    <property type="entry name" value="WD repeat domain-containing protein 83"/>
    <property type="match status" value="1"/>
</dbReference>
<dbReference type="Gene3D" id="2.130.10.10">
    <property type="entry name" value="YVTN repeat-like/Quinoprotein amine dehydrogenase"/>
    <property type="match status" value="2"/>
</dbReference>
<dbReference type="InterPro" id="IPR020472">
    <property type="entry name" value="G-protein_beta_WD-40_rep"/>
</dbReference>
<dbReference type="InterPro" id="IPR015943">
    <property type="entry name" value="WD40/YVTN_repeat-like_dom_sf"/>
</dbReference>
<dbReference type="InterPro" id="IPR019775">
    <property type="entry name" value="WD40_repeat_CS"/>
</dbReference>
<dbReference type="InterPro" id="IPR036322">
    <property type="entry name" value="WD40_repeat_dom_sf"/>
</dbReference>
<dbReference type="InterPro" id="IPR001680">
    <property type="entry name" value="WD40_rpt"/>
</dbReference>
<dbReference type="InterPro" id="IPR051980">
    <property type="entry name" value="WD_repeat_MORG1"/>
</dbReference>
<dbReference type="PANTHER" id="PTHR22842:SF3">
    <property type="entry name" value="WD REPEAT DOMAIN-CONTAINING PROTEIN 83"/>
    <property type="match status" value="1"/>
</dbReference>
<dbReference type="PANTHER" id="PTHR22842">
    <property type="entry name" value="WD40 REPEAT PROTEIN"/>
    <property type="match status" value="1"/>
</dbReference>
<dbReference type="Pfam" id="PF23761">
    <property type="entry name" value="Beta-prop_DCAF4"/>
    <property type="match status" value="1"/>
</dbReference>
<dbReference type="Pfam" id="PF00400">
    <property type="entry name" value="WD40"/>
    <property type="match status" value="3"/>
</dbReference>
<dbReference type="PIRSF" id="PIRSF002394">
    <property type="entry name" value="GN-bd_beta"/>
    <property type="match status" value="1"/>
</dbReference>
<dbReference type="PRINTS" id="PR00320">
    <property type="entry name" value="GPROTEINBRPT"/>
</dbReference>
<dbReference type="SMART" id="SM00320">
    <property type="entry name" value="WD40"/>
    <property type="match status" value="7"/>
</dbReference>
<dbReference type="SUPFAM" id="SSF50978">
    <property type="entry name" value="WD40 repeat-like"/>
    <property type="match status" value="1"/>
</dbReference>
<dbReference type="PROSITE" id="PS00678">
    <property type="entry name" value="WD_REPEATS_1"/>
    <property type="match status" value="2"/>
</dbReference>
<dbReference type="PROSITE" id="PS50082">
    <property type="entry name" value="WD_REPEATS_2"/>
    <property type="match status" value="3"/>
</dbReference>
<dbReference type="PROSITE" id="PS50294">
    <property type="entry name" value="WD_REPEATS_REGION"/>
    <property type="match status" value="1"/>
</dbReference>
<feature type="chain" id="PRO_0000235268" description="WD repeat domain-containing protein 83">
    <location>
        <begin position="1"/>
        <end position="314"/>
    </location>
</feature>
<feature type="repeat" description="WD 1">
    <location>
        <begin position="23"/>
        <end position="62"/>
    </location>
</feature>
<feature type="repeat" description="WD 2">
    <location>
        <begin position="65"/>
        <end position="104"/>
    </location>
</feature>
<feature type="repeat" description="WD 3">
    <location>
        <begin position="107"/>
        <end position="146"/>
    </location>
</feature>
<feature type="repeat" description="WD 4">
    <location>
        <begin position="151"/>
        <end position="188"/>
    </location>
</feature>
<feature type="repeat" description="WD 5">
    <location>
        <begin position="189"/>
        <end position="228"/>
    </location>
</feature>
<feature type="repeat" description="WD 6">
    <location>
        <begin position="231"/>
        <end position="272"/>
    </location>
</feature>
<feature type="repeat" description="WD 7">
    <location>
        <begin position="275"/>
        <end position="313"/>
    </location>
</feature>
<organism>
    <name type="scientific">Xenopus tropicalis</name>
    <name type="common">Western clawed frog</name>
    <name type="synonym">Silurana tropicalis</name>
    <dbReference type="NCBI Taxonomy" id="8364"/>
    <lineage>
        <taxon>Eukaryota</taxon>
        <taxon>Metazoa</taxon>
        <taxon>Chordata</taxon>
        <taxon>Craniata</taxon>
        <taxon>Vertebrata</taxon>
        <taxon>Euteleostomi</taxon>
        <taxon>Amphibia</taxon>
        <taxon>Batrachia</taxon>
        <taxon>Anura</taxon>
        <taxon>Pipoidea</taxon>
        <taxon>Pipidae</taxon>
        <taxon>Xenopodinae</taxon>
        <taxon>Xenopus</taxon>
        <taxon>Silurana</taxon>
    </lineage>
</organism>
<proteinExistence type="evidence at transcript level"/>
<sequence length="314" mass="34364">MSFPAPKPKAPELPQKLQHKLECNQGAVRAVRFNVDGNYCMTCGSDKTLKLWNPHKGTLLKTYSGHGYEVLDTAGSYDNSQMCSCSSDKTVILWDVAQGQVVRKFRGHAGKVNCVQFNEEATVIMSGSIDSSIRCWDCRSRRPEAIQILDEAKDGISSIKISDHEILAGSVDGNLRRYDLRKGEMCADYLGSPITCVSFSQDSQCLLASSLDSTLRLLDKDTGELLGEYTGHQNHSYKLDSCLSEKDTHVLSCSEDGTVCFWDLVEGSLVLKLPVGKAAVQSLSFHPSECCLLTASEGGVQLWRGASYEEEGGS</sequence>
<keyword id="KW-0963">Cytoplasm</keyword>
<keyword id="KW-1185">Reference proteome</keyword>
<keyword id="KW-0677">Repeat</keyword>
<keyword id="KW-0853">WD repeat</keyword>
<comment type="function">
    <text evidence="1">Molecular scaffold protein for various multimeric protein complexes. Acts as a module in the assembly of a multicomponent scaffold for the ERK pathway, linking ERK responses to specific agonists. Also involved in response to hypoxia by acting as a negative regulator of HIF1A/HIF-1-alpha (By similarity).</text>
</comment>
<comment type="subcellular location">
    <subcellularLocation>
        <location evidence="1">Cytoplasm</location>
    </subcellularLocation>
</comment>
<comment type="similarity">
    <text evidence="2">Belongs to the WD repeat MORG1 family.</text>
</comment>
<protein>
    <recommendedName>
        <fullName>WD repeat domain-containing protein 83</fullName>
    </recommendedName>
    <alternativeName>
        <fullName>Mitogen-activated protein kinase organizer 1</fullName>
        <shortName>MAPK organizer 1</shortName>
    </alternativeName>
</protein>
<accession>Q5XGI5</accession>
<name>WDR83_XENTR</name>
<reference key="1">
    <citation type="submission" date="2006-03" db="EMBL/GenBank/DDBJ databases">
        <authorList>
            <consortium name="Sanger Xenopus tropicalis EST/cDNA project"/>
        </authorList>
    </citation>
    <scope>NUCLEOTIDE SEQUENCE [LARGE SCALE MRNA]</scope>
    <source>
        <tissue>Gastrula</tissue>
    </source>
</reference>
<reference key="2">
    <citation type="submission" date="2004-10" db="EMBL/GenBank/DDBJ databases">
        <authorList>
            <consortium name="NIH - Xenopus Gene Collection (XGC) project"/>
        </authorList>
    </citation>
    <scope>NUCLEOTIDE SEQUENCE [LARGE SCALE MRNA]</scope>
</reference>